<comment type="function">
    <text evidence="1">Catalyzes the ATP-dependent 2-thiolation of cytidine in position 32 of tRNA, to form 2-thiocytidine (s(2)C32). The sulfur atoms are provided by the cysteine/cysteine desulfurase (IscS) system.</text>
</comment>
<comment type="catalytic activity">
    <reaction evidence="1">
        <text>cytidine(32) in tRNA + S-sulfanyl-L-cysteinyl-[cysteine desulfurase] + AH2 + ATP = 2-thiocytidine(32) in tRNA + L-cysteinyl-[cysteine desulfurase] + A + AMP + diphosphate + H(+)</text>
        <dbReference type="Rhea" id="RHEA:57048"/>
        <dbReference type="Rhea" id="RHEA-COMP:10288"/>
        <dbReference type="Rhea" id="RHEA-COMP:12157"/>
        <dbReference type="Rhea" id="RHEA-COMP:12158"/>
        <dbReference type="Rhea" id="RHEA-COMP:14821"/>
        <dbReference type="ChEBI" id="CHEBI:13193"/>
        <dbReference type="ChEBI" id="CHEBI:15378"/>
        <dbReference type="ChEBI" id="CHEBI:17499"/>
        <dbReference type="ChEBI" id="CHEBI:29950"/>
        <dbReference type="ChEBI" id="CHEBI:30616"/>
        <dbReference type="ChEBI" id="CHEBI:33019"/>
        <dbReference type="ChEBI" id="CHEBI:61963"/>
        <dbReference type="ChEBI" id="CHEBI:82748"/>
        <dbReference type="ChEBI" id="CHEBI:141453"/>
        <dbReference type="ChEBI" id="CHEBI:456215"/>
    </reaction>
    <physiologicalReaction direction="left-to-right" evidence="1">
        <dbReference type="Rhea" id="RHEA:57049"/>
    </physiologicalReaction>
</comment>
<comment type="cofactor">
    <cofactor evidence="1">
        <name>Mg(2+)</name>
        <dbReference type="ChEBI" id="CHEBI:18420"/>
    </cofactor>
</comment>
<comment type="cofactor">
    <cofactor evidence="1">
        <name>[4Fe-4S] cluster</name>
        <dbReference type="ChEBI" id="CHEBI:49883"/>
    </cofactor>
    <text evidence="1">Binds 1 [4Fe-4S] cluster per subunit. The cluster is chelated by three Cys residues, the fourth Fe has a free coordination site that may bind a sulfur atom transferred from the persulfide of IscS.</text>
</comment>
<comment type="pathway">
    <text evidence="1">tRNA modification.</text>
</comment>
<comment type="subunit">
    <text evidence="1">Homodimer.</text>
</comment>
<comment type="subcellular location">
    <subcellularLocation>
        <location evidence="1">Cytoplasm</location>
    </subcellularLocation>
</comment>
<comment type="miscellaneous">
    <text evidence="1">The thiolation reaction likely consists of two steps: a first activation step by ATP to form an adenylated intermediate of the target base of tRNA, and a second nucleophilic substitution step of the sulfur (S) atom supplied by the hydrosulfide attached to the Fe-S cluster.</text>
</comment>
<comment type="similarity">
    <text evidence="1">Belongs to the TtcA family.</text>
</comment>
<organism>
    <name type="scientific">Idiomarina loihiensis (strain ATCC BAA-735 / DSM 15497 / L2-TR)</name>
    <dbReference type="NCBI Taxonomy" id="283942"/>
    <lineage>
        <taxon>Bacteria</taxon>
        <taxon>Pseudomonadati</taxon>
        <taxon>Pseudomonadota</taxon>
        <taxon>Gammaproteobacteria</taxon>
        <taxon>Alteromonadales</taxon>
        <taxon>Idiomarinaceae</taxon>
        <taxon>Idiomarina</taxon>
    </lineage>
</organism>
<gene>
    <name evidence="1" type="primary">ttcA</name>
    <name type="ordered locus">IL1306</name>
</gene>
<sequence>MASENKYSFNKLQKRIRRDAGKAIQDFGMIEDGDHIMVCLSGGKDSYTLLDTLLYLQKVAPVRFSLVAVNLDQKQPGFPEHVLPAYLNKLGVDYKIVEEDTYSIVKEKIPEGKTTCSLCSRLRRGILYRTAKELKATKIALGHHRDDMIETLFLNMFHGGKLKSMPPKLASDNGEHVVIRPLAYAREKDIEQYSAAMEFPIIPCNLCGSQENLQRKQIKQMLNGWDKQFPGRIESLFTAMQNVVPSHLADSALFDFKAVTADGVADENGDKAFDTDSFTTNFETEDSPVFASNIPIKHLA</sequence>
<feature type="chain" id="PRO_0000348755" description="tRNA-cytidine(32) 2-sulfurtransferase">
    <location>
        <begin position="1"/>
        <end position="300"/>
    </location>
</feature>
<feature type="short sequence motif" description="PP-loop motif" evidence="1">
    <location>
        <begin position="41"/>
        <end position="46"/>
    </location>
</feature>
<feature type="binding site" evidence="1">
    <location>
        <position position="116"/>
    </location>
    <ligand>
        <name>[4Fe-4S] cluster</name>
        <dbReference type="ChEBI" id="CHEBI:49883"/>
    </ligand>
</feature>
<feature type="binding site" evidence="1">
    <location>
        <position position="119"/>
    </location>
    <ligand>
        <name>[4Fe-4S] cluster</name>
        <dbReference type="ChEBI" id="CHEBI:49883"/>
    </ligand>
</feature>
<feature type="binding site" evidence="1">
    <location>
        <position position="207"/>
    </location>
    <ligand>
        <name>[4Fe-4S] cluster</name>
        <dbReference type="ChEBI" id="CHEBI:49883"/>
    </ligand>
</feature>
<protein>
    <recommendedName>
        <fullName evidence="1">tRNA-cytidine(32) 2-sulfurtransferase</fullName>
        <ecNumber evidence="1">2.8.1.-</ecNumber>
    </recommendedName>
    <alternativeName>
        <fullName evidence="1">Two-thiocytidine biosynthesis protein A</fullName>
    </alternativeName>
    <alternativeName>
        <fullName evidence="1">tRNA 2-thiocytidine biosynthesis protein TtcA</fullName>
    </alternativeName>
</protein>
<proteinExistence type="inferred from homology"/>
<evidence type="ECO:0000255" key="1">
    <source>
        <dbReference type="HAMAP-Rule" id="MF_01850"/>
    </source>
</evidence>
<accession>Q5QZ01</accession>
<name>TTCA_IDILO</name>
<dbReference type="EC" id="2.8.1.-" evidence="1"/>
<dbReference type="EMBL" id="AE017340">
    <property type="protein sequence ID" value="AAV82146.1"/>
    <property type="molecule type" value="Genomic_DNA"/>
</dbReference>
<dbReference type="RefSeq" id="WP_011234552.1">
    <property type="nucleotide sequence ID" value="NC_006512.1"/>
</dbReference>
<dbReference type="SMR" id="Q5QZ01"/>
<dbReference type="STRING" id="283942.IL1306"/>
<dbReference type="GeneID" id="41336482"/>
<dbReference type="KEGG" id="ilo:IL1306"/>
<dbReference type="eggNOG" id="COG0037">
    <property type="taxonomic scope" value="Bacteria"/>
</dbReference>
<dbReference type="HOGENOM" id="CLU_026481_0_0_6"/>
<dbReference type="OrthoDB" id="9801054at2"/>
<dbReference type="Proteomes" id="UP000001171">
    <property type="component" value="Chromosome"/>
</dbReference>
<dbReference type="GO" id="GO:0005737">
    <property type="term" value="C:cytoplasm"/>
    <property type="evidence" value="ECO:0007669"/>
    <property type="project" value="UniProtKB-SubCell"/>
</dbReference>
<dbReference type="GO" id="GO:0051539">
    <property type="term" value="F:4 iron, 4 sulfur cluster binding"/>
    <property type="evidence" value="ECO:0007669"/>
    <property type="project" value="UniProtKB-UniRule"/>
</dbReference>
<dbReference type="GO" id="GO:0005524">
    <property type="term" value="F:ATP binding"/>
    <property type="evidence" value="ECO:0007669"/>
    <property type="project" value="UniProtKB-UniRule"/>
</dbReference>
<dbReference type="GO" id="GO:0000287">
    <property type="term" value="F:magnesium ion binding"/>
    <property type="evidence" value="ECO:0007669"/>
    <property type="project" value="UniProtKB-UniRule"/>
</dbReference>
<dbReference type="GO" id="GO:0016783">
    <property type="term" value="F:sulfurtransferase activity"/>
    <property type="evidence" value="ECO:0007669"/>
    <property type="project" value="UniProtKB-UniRule"/>
</dbReference>
<dbReference type="GO" id="GO:0000049">
    <property type="term" value="F:tRNA binding"/>
    <property type="evidence" value="ECO:0007669"/>
    <property type="project" value="UniProtKB-KW"/>
</dbReference>
<dbReference type="GO" id="GO:0034227">
    <property type="term" value="P:tRNA thio-modification"/>
    <property type="evidence" value="ECO:0007669"/>
    <property type="project" value="UniProtKB-UniRule"/>
</dbReference>
<dbReference type="CDD" id="cd24138">
    <property type="entry name" value="TtcA-like"/>
    <property type="match status" value="1"/>
</dbReference>
<dbReference type="Gene3D" id="3.40.50.620">
    <property type="entry name" value="HUPs"/>
    <property type="match status" value="1"/>
</dbReference>
<dbReference type="HAMAP" id="MF_01850">
    <property type="entry name" value="TtcA"/>
    <property type="match status" value="1"/>
</dbReference>
<dbReference type="InterPro" id="IPR014729">
    <property type="entry name" value="Rossmann-like_a/b/a_fold"/>
</dbReference>
<dbReference type="InterPro" id="IPR011063">
    <property type="entry name" value="TilS/TtcA_N"/>
</dbReference>
<dbReference type="InterPro" id="IPR012089">
    <property type="entry name" value="tRNA_Cyd_32_2_STrfase"/>
</dbReference>
<dbReference type="InterPro" id="IPR035107">
    <property type="entry name" value="tRNA_thiolation_TtcA_Ctu1"/>
</dbReference>
<dbReference type="NCBIfam" id="NF007972">
    <property type="entry name" value="PRK10696.1"/>
    <property type="match status" value="1"/>
</dbReference>
<dbReference type="PANTHER" id="PTHR43686:SF1">
    <property type="entry name" value="AMINOTRAN_5 DOMAIN-CONTAINING PROTEIN"/>
    <property type="match status" value="1"/>
</dbReference>
<dbReference type="PANTHER" id="PTHR43686">
    <property type="entry name" value="SULFURTRANSFERASE-RELATED"/>
    <property type="match status" value="1"/>
</dbReference>
<dbReference type="Pfam" id="PF01171">
    <property type="entry name" value="ATP_bind_3"/>
    <property type="match status" value="1"/>
</dbReference>
<dbReference type="PIRSF" id="PIRSF004976">
    <property type="entry name" value="ATPase_YdaO"/>
    <property type="match status" value="1"/>
</dbReference>
<dbReference type="SUPFAM" id="SSF52402">
    <property type="entry name" value="Adenine nucleotide alpha hydrolases-like"/>
    <property type="match status" value="1"/>
</dbReference>
<keyword id="KW-0004">4Fe-4S</keyword>
<keyword id="KW-0067">ATP-binding</keyword>
<keyword id="KW-0963">Cytoplasm</keyword>
<keyword id="KW-0408">Iron</keyword>
<keyword id="KW-0411">Iron-sulfur</keyword>
<keyword id="KW-0460">Magnesium</keyword>
<keyword id="KW-0479">Metal-binding</keyword>
<keyword id="KW-0547">Nucleotide-binding</keyword>
<keyword id="KW-1185">Reference proteome</keyword>
<keyword id="KW-0694">RNA-binding</keyword>
<keyword id="KW-0808">Transferase</keyword>
<keyword id="KW-0819">tRNA processing</keyword>
<keyword id="KW-0820">tRNA-binding</keyword>
<reference key="1">
    <citation type="journal article" date="2004" name="Proc. Natl. Acad. Sci. U.S.A.">
        <title>Genome sequence of the deep-sea gamma-proteobacterium Idiomarina loihiensis reveals amino acid fermentation as a source of carbon and energy.</title>
        <authorList>
            <person name="Hou S."/>
            <person name="Saw J.H."/>
            <person name="Lee K.S."/>
            <person name="Freitas T.A."/>
            <person name="Belisle C."/>
            <person name="Kawarabayasi Y."/>
            <person name="Donachie S.P."/>
            <person name="Pikina A."/>
            <person name="Galperin M.Y."/>
            <person name="Koonin E.V."/>
            <person name="Makarova K.S."/>
            <person name="Omelchenko M.V."/>
            <person name="Sorokin A."/>
            <person name="Wolf Y.I."/>
            <person name="Li Q.X."/>
            <person name="Keum Y.S."/>
            <person name="Campbell S."/>
            <person name="Denery J."/>
            <person name="Aizawa S."/>
            <person name="Shibata S."/>
            <person name="Malahoff A."/>
            <person name="Alam M."/>
        </authorList>
    </citation>
    <scope>NUCLEOTIDE SEQUENCE [LARGE SCALE GENOMIC DNA]</scope>
    <source>
        <strain>ATCC BAA-735 / DSM 15497 / L2-TR</strain>
    </source>
</reference>